<reference key="1">
    <citation type="submission" date="2007-01" db="EMBL/GenBank/DDBJ databases">
        <authorList>
            <consortium name="NIH - Zebrafish Gene Collection (ZGC) project"/>
        </authorList>
    </citation>
    <scope>NUCLEOTIDE SEQUENCE [LARGE SCALE MRNA]</scope>
    <source>
        <tissue>Kidney</tissue>
    </source>
</reference>
<accession>A2RRV9</accession>
<feature type="chain" id="PRO_0000288489" description="Cytosolic Fe-S cluster assembly factor narfl">
    <location>
        <begin position="1"/>
        <end position="411"/>
    </location>
</feature>
<feature type="binding site" evidence="2">
    <location>
        <position position="11"/>
    </location>
    <ligand>
        <name>[4Fe-4S] cluster</name>
        <dbReference type="ChEBI" id="CHEBI:49883"/>
        <label>1</label>
    </ligand>
</feature>
<feature type="binding site" evidence="2">
    <location>
        <position position="124"/>
    </location>
    <ligand>
        <name>[4Fe-4S] cluster</name>
        <dbReference type="ChEBI" id="CHEBI:49883"/>
        <label>2</label>
    </ligand>
</feature>
<feature type="binding site" evidence="2">
    <location>
        <position position="180"/>
    </location>
    <ligand>
        <name>[4Fe-4S] cluster</name>
        <dbReference type="ChEBI" id="CHEBI:49883"/>
        <label>2</label>
    </ligand>
</feature>
<feature type="binding site" evidence="2">
    <location>
        <position position="329"/>
    </location>
    <ligand>
        <name>[4Fe-4S] cluster</name>
        <dbReference type="ChEBI" id="CHEBI:49883"/>
        <label>2</label>
    </ligand>
</feature>
<feature type="binding site" evidence="2">
    <location>
        <position position="333"/>
    </location>
    <ligand>
        <name>[4Fe-4S] cluster</name>
        <dbReference type="ChEBI" id="CHEBI:49883"/>
        <label>2</label>
    </ligand>
</feature>
<dbReference type="EMBL" id="BC131874">
    <property type="protein sequence ID" value="AAI31875.1"/>
    <property type="molecule type" value="mRNA"/>
</dbReference>
<dbReference type="RefSeq" id="NP_001074460.2">
    <property type="nucleotide sequence ID" value="NM_001080991.2"/>
</dbReference>
<dbReference type="SMR" id="A2RRV9"/>
<dbReference type="FunCoup" id="A2RRV9">
    <property type="interactions" value="2012"/>
</dbReference>
<dbReference type="STRING" id="7955.ENSDARP00000084112"/>
<dbReference type="PaxDb" id="7955-ENSDARP00000084112"/>
<dbReference type="PeptideAtlas" id="A2RRV9"/>
<dbReference type="GeneID" id="560541"/>
<dbReference type="KEGG" id="dre:560541"/>
<dbReference type="AGR" id="ZFIN:ZDB-GENE-070209-119"/>
<dbReference type="CTD" id="560541"/>
<dbReference type="ZFIN" id="ZDB-GENE-070209-119">
    <property type="gene designation" value="narfl"/>
</dbReference>
<dbReference type="eggNOG" id="KOG2439">
    <property type="taxonomic scope" value="Eukaryota"/>
</dbReference>
<dbReference type="InParanoid" id="A2RRV9"/>
<dbReference type="OrthoDB" id="10253113at2759"/>
<dbReference type="PhylomeDB" id="A2RRV9"/>
<dbReference type="PRO" id="PR:A2RRV9"/>
<dbReference type="Proteomes" id="UP000000437">
    <property type="component" value="Chromosome 3"/>
</dbReference>
<dbReference type="GO" id="GO:0097361">
    <property type="term" value="C:cytosolic [4Fe-4S] assembly targeting complex"/>
    <property type="evidence" value="ECO:0000250"/>
    <property type="project" value="UniProtKB"/>
</dbReference>
<dbReference type="GO" id="GO:0051539">
    <property type="term" value="F:4 iron, 4 sulfur cluster binding"/>
    <property type="evidence" value="ECO:0007669"/>
    <property type="project" value="UniProtKB-KW"/>
</dbReference>
<dbReference type="GO" id="GO:0046872">
    <property type="term" value="F:metal ion binding"/>
    <property type="evidence" value="ECO:0007669"/>
    <property type="project" value="UniProtKB-KW"/>
</dbReference>
<dbReference type="GO" id="GO:0016226">
    <property type="term" value="P:iron-sulfur cluster assembly"/>
    <property type="evidence" value="ECO:0000250"/>
    <property type="project" value="UniProtKB"/>
</dbReference>
<dbReference type="GO" id="GO:0045765">
    <property type="term" value="P:regulation of angiogenesis"/>
    <property type="evidence" value="ECO:0000315"/>
    <property type="project" value="ZFIN"/>
</dbReference>
<dbReference type="GO" id="GO:0002040">
    <property type="term" value="P:sprouting angiogenesis"/>
    <property type="evidence" value="ECO:0000315"/>
    <property type="project" value="ZFIN"/>
</dbReference>
<dbReference type="Gene3D" id="3.40.50.1780">
    <property type="match status" value="1"/>
</dbReference>
<dbReference type="Gene3D" id="3.40.950.10">
    <property type="entry name" value="Fe-only Hydrogenase (Larger Subunit), Chain L, domain 3"/>
    <property type="match status" value="1"/>
</dbReference>
<dbReference type="InterPro" id="IPR050340">
    <property type="entry name" value="Cytosolic_Fe-S_CAF"/>
</dbReference>
<dbReference type="InterPro" id="IPR009016">
    <property type="entry name" value="Fe_hydrogenase"/>
</dbReference>
<dbReference type="InterPro" id="IPR004108">
    <property type="entry name" value="Fe_hydrogenase_lsu_C"/>
</dbReference>
<dbReference type="InterPro" id="IPR003149">
    <property type="entry name" value="Fe_hydrogenase_ssu"/>
</dbReference>
<dbReference type="PANTHER" id="PTHR11615">
    <property type="entry name" value="NITRATE, FORMATE, IRON DEHYDROGENASE"/>
    <property type="match status" value="1"/>
</dbReference>
<dbReference type="Pfam" id="PF02906">
    <property type="entry name" value="Fe_hyd_lg_C"/>
    <property type="match status" value="1"/>
</dbReference>
<dbReference type="Pfam" id="PF02256">
    <property type="entry name" value="Fe_hyd_SSU"/>
    <property type="match status" value="1"/>
</dbReference>
<dbReference type="SMART" id="SM00902">
    <property type="entry name" value="Fe_hyd_SSU"/>
    <property type="match status" value="1"/>
</dbReference>
<dbReference type="SUPFAM" id="SSF53920">
    <property type="entry name" value="Fe-only hydrogenase"/>
    <property type="match status" value="1"/>
</dbReference>
<name>NARFL_DANRE</name>
<organism>
    <name type="scientific">Danio rerio</name>
    <name type="common">Zebrafish</name>
    <name type="synonym">Brachydanio rerio</name>
    <dbReference type="NCBI Taxonomy" id="7955"/>
    <lineage>
        <taxon>Eukaryota</taxon>
        <taxon>Metazoa</taxon>
        <taxon>Chordata</taxon>
        <taxon>Craniata</taxon>
        <taxon>Vertebrata</taxon>
        <taxon>Euteleostomi</taxon>
        <taxon>Actinopterygii</taxon>
        <taxon>Neopterygii</taxon>
        <taxon>Teleostei</taxon>
        <taxon>Ostariophysi</taxon>
        <taxon>Cypriniformes</taxon>
        <taxon>Danionidae</taxon>
        <taxon>Danioninae</taxon>
        <taxon>Danio</taxon>
    </lineage>
</organism>
<evidence type="ECO:0000250" key="1"/>
<evidence type="ECO:0000255" key="2"/>
<evidence type="ECO:0000305" key="3"/>
<sequence>MAVIFRSISGCITSAESVLITQQSHEELYRVLRHNKQVSSTEQKVVVVSVSPQSRASLAAHYGIGSSEVARKLTSFLKHLGVHHVFDTAFSRSFSLIESQREFLQRFSQREADKKALPMLASACPGWICYAEKTHGEFILPYISTTRSPQQIMGSLVKGYFASQKGVSPQMIYHVTVMPCYDKKLEASRPDFYLSEHETREVDCVITSGEVLKMLEEEKVSLRDVQPAPLDTMFSNVCGEELLGHAGSGSGGYLHHIYKHAAKQLFGVDVDELTYKTMKNKDFQEVTLEKDGQVLLKFAAVYGFRNIQNLVQKLKRGKSPYHFVEVMACPSGCLNGGGQLKPSADQSNKELLQQVEEVYRSEHPSVPEDDSQVAELYQSWLESVGEEKARQLLHTQYHAVEKTANGLSIKW</sequence>
<comment type="function">
    <text evidence="1">Component of the cytosolic iron-sulfur protein assembly (CIA) complex, a multiprotein complex that mediates the incorporation of iron-sulfur cluster into extramitochondrial Fe/S proteins.</text>
</comment>
<comment type="subunit">
    <text evidence="1">Component of the CIA complex.</text>
</comment>
<comment type="similarity">
    <text evidence="3">Belongs to the NARF family.</text>
</comment>
<proteinExistence type="evidence at transcript level"/>
<gene>
    <name type="primary">narfl</name>
    <name type="ORF">zgc:158422</name>
</gene>
<keyword id="KW-0004">4Fe-4S</keyword>
<keyword id="KW-0408">Iron</keyword>
<keyword id="KW-0411">Iron-sulfur</keyword>
<keyword id="KW-0479">Metal-binding</keyword>
<keyword id="KW-1185">Reference proteome</keyword>
<protein>
    <recommendedName>
        <fullName>Cytosolic Fe-S cluster assembly factor narfl</fullName>
    </recommendedName>
    <alternativeName>
        <fullName>Nuclear prelamin A recognition factor-like protein</fullName>
    </alternativeName>
</protein>